<proteinExistence type="evidence at protein level"/>
<gene>
    <name type="primary">ags1</name>
    <name type="synonym">mok1</name>
    <name type="ORF">SPCC1281.01</name>
    <name type="ORF">SPCC17A7.01</name>
    <name type="ORF">SPCC338.01c</name>
</gene>
<comment type="function">
    <text evidence="3">Required for alpha-1,3-glucan and alpha-1,4-glucan production which are required for cell wall synthesis.</text>
</comment>
<comment type="catalytic activity">
    <reaction>
        <text>[(1-&gt;3)-alpha-D-glucosyl](n) + UDP-alpha-D-glucose = [(1-&gt;3)-alpha-D-glucosyl](n+1) + UDP + H(+)</text>
        <dbReference type="Rhea" id="RHEA:19749"/>
        <dbReference type="Rhea" id="RHEA-COMP:11150"/>
        <dbReference type="Rhea" id="RHEA-COMP:11151"/>
        <dbReference type="ChEBI" id="CHEBI:15378"/>
        <dbReference type="ChEBI" id="CHEBI:28100"/>
        <dbReference type="ChEBI" id="CHEBI:58223"/>
        <dbReference type="ChEBI" id="CHEBI:58885"/>
        <dbReference type="EC" id="2.4.1.183"/>
    </reaction>
</comment>
<comment type="subunit">
    <text evidence="2">Interacts with sad1.</text>
</comment>
<comment type="similarity">
    <text evidence="5">Belongs to the glycosyltransferase group 1 family.</text>
</comment>
<dbReference type="EC" id="2.4.1.183"/>
<dbReference type="EMBL" id="AB019183">
    <property type="protein sequence ID" value="BAA34054.1"/>
    <property type="molecule type" value="Genomic_DNA"/>
</dbReference>
<dbReference type="EMBL" id="AF061180">
    <property type="protein sequence ID" value="AAC31430.1"/>
    <property type="molecule type" value="Genomic_DNA"/>
</dbReference>
<dbReference type="EMBL" id="AF063305">
    <property type="protein sequence ID" value="AAC39519.1"/>
    <property type="molecule type" value="mRNA"/>
</dbReference>
<dbReference type="EMBL" id="CU329672">
    <property type="protein sequence ID" value="CAA19332.2"/>
    <property type="molecule type" value="Genomic_DNA"/>
</dbReference>
<dbReference type="EMBL" id="D89202">
    <property type="protein sequence ID" value="BAA13863.1"/>
    <property type="molecule type" value="mRNA"/>
</dbReference>
<dbReference type="PIR" id="T43731">
    <property type="entry name" value="T43731"/>
</dbReference>
<dbReference type="RefSeq" id="NP_588165.3">
    <property type="nucleotide sequence ID" value="NM_001023154.3"/>
</dbReference>
<dbReference type="FunCoup" id="Q9USK8">
    <property type="interactions" value="6"/>
</dbReference>
<dbReference type="IntAct" id="Q9USK8">
    <property type="interactions" value="1"/>
</dbReference>
<dbReference type="STRING" id="284812.Q9USK8"/>
<dbReference type="CAZy" id="GH13">
    <property type="family name" value="Glycoside Hydrolase Family 13"/>
</dbReference>
<dbReference type="CAZy" id="GT5">
    <property type="family name" value="Glycosyltransferase Family 5"/>
</dbReference>
<dbReference type="iPTMnet" id="Q9USK8"/>
<dbReference type="PaxDb" id="4896-SPCC1281.01.1"/>
<dbReference type="EnsemblFungi" id="SPCC1281.01.1">
    <property type="protein sequence ID" value="SPCC1281.01.1:pep"/>
    <property type="gene ID" value="SPCC1281.01"/>
</dbReference>
<dbReference type="GeneID" id="2539007"/>
<dbReference type="KEGG" id="spo:2539007"/>
<dbReference type="PomBase" id="SPCC1281.01">
    <property type="gene designation" value="ags1"/>
</dbReference>
<dbReference type="eggNOG" id="ENOG502QSGC">
    <property type="taxonomic scope" value="Eukaryota"/>
</dbReference>
<dbReference type="HOGENOM" id="CLU_000488_0_0_1"/>
<dbReference type="InParanoid" id="Q9USK8"/>
<dbReference type="OMA" id="NIGPGPI"/>
<dbReference type="PhylomeDB" id="Q9USK8"/>
<dbReference type="BRENDA" id="2.4.1.B3">
    <property type="organism ID" value="5613"/>
</dbReference>
<dbReference type="PRO" id="PR:Q9USK8"/>
<dbReference type="Proteomes" id="UP000002485">
    <property type="component" value="Chromosome III"/>
</dbReference>
<dbReference type="GO" id="GO:0005619">
    <property type="term" value="C:ascospore wall"/>
    <property type="evidence" value="ECO:0000314"/>
    <property type="project" value="PomBase"/>
</dbReference>
<dbReference type="GO" id="GO:0032153">
    <property type="term" value="C:cell division site"/>
    <property type="evidence" value="ECO:0000314"/>
    <property type="project" value="PomBase"/>
</dbReference>
<dbReference type="GO" id="GO:0051286">
    <property type="term" value="C:cell tip"/>
    <property type="evidence" value="ECO:0000314"/>
    <property type="project" value="PomBase"/>
</dbReference>
<dbReference type="GO" id="GO:0000935">
    <property type="term" value="C:division septum"/>
    <property type="evidence" value="ECO:0000314"/>
    <property type="project" value="PomBase"/>
</dbReference>
<dbReference type="GO" id="GO:0009897">
    <property type="term" value="C:external side of plasma membrane"/>
    <property type="evidence" value="ECO:0000314"/>
    <property type="project" value="PomBase"/>
</dbReference>
<dbReference type="GO" id="GO:0009277">
    <property type="term" value="C:fungal-type cell wall"/>
    <property type="evidence" value="ECO:0000318"/>
    <property type="project" value="GO_Central"/>
</dbReference>
<dbReference type="GO" id="GO:0032178">
    <property type="term" value="C:medial membrane band"/>
    <property type="evidence" value="ECO:0000269"/>
    <property type="project" value="PomBase"/>
</dbReference>
<dbReference type="GO" id="GO:0016020">
    <property type="term" value="C:membrane"/>
    <property type="evidence" value="ECO:0000314"/>
    <property type="project" value="PomBase"/>
</dbReference>
<dbReference type="GO" id="GO:0035841">
    <property type="term" value="C:new growing cell tip"/>
    <property type="evidence" value="ECO:0000314"/>
    <property type="project" value="PomBase"/>
</dbReference>
<dbReference type="GO" id="GO:0035840">
    <property type="term" value="C:old growing cell tip"/>
    <property type="evidence" value="ECO:0000314"/>
    <property type="project" value="PomBase"/>
</dbReference>
<dbReference type="GO" id="GO:0005886">
    <property type="term" value="C:plasma membrane"/>
    <property type="evidence" value="ECO:0000314"/>
    <property type="project" value="PomBase"/>
</dbReference>
<dbReference type="GO" id="GO:0031520">
    <property type="term" value="C:plasma membrane of cell tip"/>
    <property type="evidence" value="ECO:0000269"/>
    <property type="project" value="PomBase"/>
</dbReference>
<dbReference type="GO" id="GO:0047657">
    <property type="term" value="F:alpha-1,3-glucan synthase activity"/>
    <property type="evidence" value="ECO:0000315"/>
    <property type="project" value="PomBase"/>
</dbReference>
<dbReference type="GO" id="GO:0030979">
    <property type="term" value="P:alpha-glucan biosynthetic process"/>
    <property type="evidence" value="ECO:0000315"/>
    <property type="project" value="PomBase"/>
</dbReference>
<dbReference type="GO" id="GO:0071555">
    <property type="term" value="P:cell wall organization"/>
    <property type="evidence" value="ECO:0007669"/>
    <property type="project" value="UniProtKB-KW"/>
</dbReference>
<dbReference type="GO" id="GO:0070600">
    <property type="term" value="P:fungal-type cell wall (1-&gt;3)-alpha-glucan biosynthetic process"/>
    <property type="evidence" value="ECO:0000315"/>
    <property type="project" value="PomBase"/>
</dbReference>
<dbReference type="GO" id="GO:0009272">
    <property type="term" value="P:fungal-type cell wall biogenesis"/>
    <property type="evidence" value="ECO:0000315"/>
    <property type="project" value="PomBase"/>
</dbReference>
<dbReference type="GO" id="GO:0031671">
    <property type="term" value="P:primary cell septum biogenesis"/>
    <property type="evidence" value="ECO:0000315"/>
    <property type="project" value="PomBase"/>
</dbReference>
<dbReference type="CDD" id="cd11323">
    <property type="entry name" value="AmyAc_AGS"/>
    <property type="match status" value="1"/>
</dbReference>
<dbReference type="CDD" id="cd03791">
    <property type="entry name" value="GT5_Glycogen_synthase_DULL1-like"/>
    <property type="match status" value="1"/>
</dbReference>
<dbReference type="CDD" id="cd06174">
    <property type="entry name" value="MFS"/>
    <property type="match status" value="1"/>
</dbReference>
<dbReference type="FunFam" id="3.40.50.2000:FF:000058">
    <property type="entry name" value="Alpha-1,3-glucan synthase Ags1"/>
    <property type="match status" value="1"/>
</dbReference>
<dbReference type="FunFam" id="3.20.20.80:FF:000073">
    <property type="entry name" value="Alpha-1,3-glucan synthase Ags2"/>
    <property type="match status" value="1"/>
</dbReference>
<dbReference type="FunFam" id="3.40.50.2000:FF:000052">
    <property type="entry name" value="Alpha-1,3-glucan synthase Ags2"/>
    <property type="match status" value="1"/>
</dbReference>
<dbReference type="Gene3D" id="3.40.50.2000">
    <property type="entry name" value="Glycogen Phosphorylase B"/>
    <property type="match status" value="2"/>
</dbReference>
<dbReference type="Gene3D" id="3.20.20.80">
    <property type="entry name" value="Glycosidases"/>
    <property type="match status" value="1"/>
</dbReference>
<dbReference type="InterPro" id="IPR006047">
    <property type="entry name" value="Glyco_hydro_13_cat_dom"/>
</dbReference>
<dbReference type="InterPro" id="IPR001296">
    <property type="entry name" value="Glyco_trans_1"/>
</dbReference>
<dbReference type="InterPro" id="IPR017853">
    <property type="entry name" value="Glycoside_hydrolase_SF"/>
</dbReference>
<dbReference type="InterPro" id="IPR013534">
    <property type="entry name" value="Starch_synth_cat_dom"/>
</dbReference>
<dbReference type="PANTHER" id="PTHR47182:SF2">
    <property type="entry name" value="CELL WALL ALPHA-1,3-GLUCAN SYNTHASE AGS1"/>
    <property type="match status" value="1"/>
</dbReference>
<dbReference type="PANTHER" id="PTHR47182">
    <property type="entry name" value="CELL WALL ALPHA-1,3-GLUCAN SYNTHASE AGS1-RELATED"/>
    <property type="match status" value="1"/>
</dbReference>
<dbReference type="Pfam" id="PF00128">
    <property type="entry name" value="Alpha-amylase"/>
    <property type="match status" value="1"/>
</dbReference>
<dbReference type="Pfam" id="PF08323">
    <property type="entry name" value="Glyco_transf_5"/>
    <property type="match status" value="1"/>
</dbReference>
<dbReference type="Pfam" id="PF00534">
    <property type="entry name" value="Glycos_transf_1"/>
    <property type="match status" value="1"/>
</dbReference>
<dbReference type="SMART" id="SM00642">
    <property type="entry name" value="Aamy"/>
    <property type="match status" value="1"/>
</dbReference>
<dbReference type="SUPFAM" id="SSF51445">
    <property type="entry name" value="(Trans)glycosidases"/>
    <property type="match status" value="1"/>
</dbReference>
<dbReference type="SUPFAM" id="SSF53756">
    <property type="entry name" value="UDP-Glycosyltransferase/glycogen phosphorylase"/>
    <property type="match status" value="1"/>
</dbReference>
<evidence type="ECO:0000256" key="1">
    <source>
        <dbReference type="SAM" id="MobiDB-lite"/>
    </source>
</evidence>
<evidence type="ECO:0000269" key="2">
    <source>
    </source>
</evidence>
<evidence type="ECO:0000269" key="3">
    <source>
    </source>
</evidence>
<evidence type="ECO:0000269" key="4">
    <source>
    </source>
</evidence>
<evidence type="ECO:0000305" key="5"/>
<protein>
    <recommendedName>
        <fullName>Cell wall alpha-1,3-glucan synthase ags1</fullName>
        <ecNumber>2.4.1.183</ecNumber>
    </recommendedName>
    <alternativeName>
        <fullName>Cell wall alpha-1,4-glucan synthase</fullName>
    </alternativeName>
</protein>
<feature type="chain" id="PRO_0000080328" description="Cell wall alpha-1,3-glucan synthase ags1">
    <location>
        <begin position="1"/>
        <end position="2410"/>
    </location>
</feature>
<feature type="region of interest" description="Disordered" evidence="1">
    <location>
        <begin position="1685"/>
        <end position="1706"/>
    </location>
</feature>
<feature type="region of interest" description="Disordered" evidence="1">
    <location>
        <begin position="1796"/>
        <end position="1827"/>
    </location>
</feature>
<feature type="compositionally biased region" description="Low complexity" evidence="1">
    <location>
        <begin position="1802"/>
        <end position="1827"/>
    </location>
</feature>
<feature type="modified residue" description="Phosphoserine" evidence="4">
    <location>
        <position position="1643"/>
    </location>
</feature>
<feature type="modified residue" description="Phosphoserine" evidence="4">
    <location>
        <position position="1644"/>
    </location>
</feature>
<feature type="modified residue" description="Phosphoserine" evidence="4">
    <location>
        <position position="1651"/>
    </location>
</feature>
<feature type="modified residue" description="Phosphothreonine" evidence="4">
    <location>
        <position position="1653"/>
    </location>
</feature>
<feature type="modified residue" description="Phosphoserine" evidence="4">
    <location>
        <position position="1738"/>
    </location>
</feature>
<feature type="modified residue" description="Phosphoserine" evidence="4">
    <location>
        <position position="1812"/>
    </location>
</feature>
<feature type="mutagenesis site" description="No accumulation of alpha-1,4-glucan." evidence="3">
    <original>E</original>
    <variation>A</variation>
    <location>
        <position position="1526"/>
    </location>
</feature>
<feature type="sequence conflict" description="In Ref. 1; BAA34054 and 2; AAC31430." evidence="5" ref="1 2">
    <original>Y</original>
    <variation>F</variation>
    <location>
        <position position="256"/>
    </location>
</feature>
<feature type="sequence conflict" description="In Ref. 1; BAA34054." evidence="5" ref="1">
    <original>V</original>
    <variation>A</variation>
    <location>
        <position position="1849"/>
    </location>
</feature>
<feature type="sequence conflict" description="In Ref. 1; BAA34054." evidence="5" ref="1">
    <original>G</original>
    <variation>C</variation>
    <location>
        <position position="2028"/>
    </location>
</feature>
<accession>Q9USK8</accession>
<accession>P78852</accession>
<accession>Q9URK2</accession>
<accession>Q9URT5</accession>
<sequence length="2410" mass="272122">MHGLQGLCFRRAVIALALLLFHSVFAAPYSEDEEPWNLNQNKNASSVLEYSGEWADHDFFPSPDNWRMSFITVILDRWYDGDPSNNDIEKTPFEYDISEVSFRNGGDIVGLELSLDYLEGLGTQGIYIAGTPFVNMPWGADQYSPLDYTILDHHLGTIDQWRSTITAMHERGMYLVVDLTVATLGDLIGMVGHLNDTSGVDFNLNEYNAMWKTSEYRYVDFNFTNVYNTSCEYPRFWGEDGGPVSIQFKGCYVSDYDHYGDTEAFGSHPDWQRQLSKFASVQDRLRDWKPDVAEKLMHLSCLVISMLDVDGFRIDKATQMTADFIVDWSMYVRECAAKYNKKNFLIVGEVTGSSSYGSIYYNRGRQPDQRPPNVTAAFNYTSDESQYSLRDSDHYGFDGSAFHYSIYRALLRFLGMDSKMEIDFDVSSVLTTAWNGIQINEDAVNINTGTVEPLHMYGVANHDVFRWGAIENGTARLILGTMITSLLFPGIPLLYYGDEQGMYVLDNSANNYLYGRQAMNSARAWYIHGCYNGSATSYPTVDLSPAQRGCQDSWNYLDHFDIASAHRNVYRNIHSIRRHYLSLSEGWRFDHIANWTDDVYFPDSQPYASPMGLYSVLRGPMKEIQDFDSITNASNVSKSEVWVLYANRNDTHLWSYDCTDEDSAIIGPWKSGTTLRNLIYPYDTIELEDSWNSSWGCIPNIELDPYAFKLYVPEEDFIENDPIITSLTPEHDARVVASGNEIDLTIEFSRSMDCDSIKNALSVVSSTRPKNTTAVIDVDSSFCRNYSEDASTSLHGQTAGRFAWYGTLTNIDPGIHRISLKSVPTSDFSSRTLSTDNFLIRVGSTNNPIVHYSANYSDTLLIMQDGDLYINHSAPGAVLFRYSTDFQSHWSDWEEYNGGLTKVQASNWTGTRRQGWEGHHIHVQYWSDLGGSANHMQQSDYGFKYRRFLPHMFLEGDFNEYGYDSGVENRFLQKSDFYWEAGFISETYPAAIQLNVWGMNPDGIPDKTRVYGSQGNSTVLSRSDPASLVGNNITIYHPPPHGYLSYKILLRDDDMIYRLAPSGEWGVSIAIYVLCIVIPPLSAIVVSWAFKNSFYTVKFNKHGNNDLGKFYPLKSLVPFRKKNDLDSPAKVTPVVSGVSARKKKCVLIATLEYDITDWKIRIKIGGLGVMAQLMAQHLKHEDLVWVVPCVGDVVYPEAEEASPIEVKIIDQTYTINVYHHYLDNIKYVLLDAPVFRRQTSKEPYPARMDDLGSAIFYSAWNQCIAEVIRRNPIDIYHINDYHGALAPCYLLPDIIPCALSLHNAEFQGLWPLRTPEEKEEVCAVYNISQRVCTKYVQFGNVFNLLHAAVSYIRIHQKGFGAVGVSNKYGKRSWARYPIFWGLKKIGKLPNPDPTDTDEIVDDKAVAITDIDPDMEKSKVEHKRLAQEWAGLEVNEKYDLLVFVGRWSSQKGIDLIADIAPSLLESYKVQLICVGPIIDLYGKFAAEKLDVLQKKYPTRVFSQPKFTQLPPYIFSGADFALIPSRDEPFGLVAVEFGRKGALGIGARVGGLGQMPGWWYSVESSATPHLLKQFEQACQQALSSSQRTRARLRARSAKQRFPVSQWKAKLEALTDGCIKCSQKYGRNSRSRSSFYSLIHESFSRSSEVLPTSSDTNLDAKRAEEAEMIMIETPPTAEANTGAKLDRSLSLGSRRGPGHTTEDDASDGLDTIQEESMTAGDSTSGGSDISRYRAERLNPDSHSPSEYSFDSGDYEFDPQRSYYYDDLFDDDTTIRNAPSFRPQMGSFDAEHAVGATFSQDDLSDPARSVDSDSVSPPLPPFVAGSNPNARNNNNPYFYGNLHTESSLSLASVMSGKEKRDFSLTRVEETFTDEDGQALRSFSEKLQKLNAKNSKDDLCIEQYLMKSERSFFHERRAIKLGLQKPNKLHVNELSSHSGTEESESLSNGQTSYDDIIAMTDESNYTQLGDDDFKTIHGLKKFMLFKIYDWPIYSIFLALGQILAATAYQLTLFTGTSNIQTYEIYSVCAFFIGASFVWWFMFARLPSYYVLSIPWLFYAVALFLVGLPAFDTVAPGRVWITNVAAWIYAIASASGSIFFSLNFGEEGAVQTRIWVFRACLVQGVQQVWSAALWYWGAHLNKRLTAGEANTFKMSPAIPSITWPLSAVSILIFALLFKGLPEYYRQLSGSIPAFYKSLLRRKLVVWFCISVFLQNFWLSSLNGRSWSYLWDIGNIHQWQIFLLIVAFYIVLWALLLGVLAWISRTHSWIICVFGVGLGAPRWLQQFWATSNIGLYLPWAGYSGPYLGRTLWLWLGVLDAIQSVGIGMILLQTLTRRHVASTLMTGQIVGAVATMIGRGASPNREGPANVFIDFTKWNHGDGSSILASAPFWINIICQLAICVGYLAFFRRENLSRP</sequence>
<name>AGS1_SCHPO</name>
<organism>
    <name type="scientific">Schizosaccharomyces pombe (strain 972 / ATCC 24843)</name>
    <name type="common">Fission yeast</name>
    <dbReference type="NCBI Taxonomy" id="284812"/>
    <lineage>
        <taxon>Eukaryota</taxon>
        <taxon>Fungi</taxon>
        <taxon>Dikarya</taxon>
        <taxon>Ascomycota</taxon>
        <taxon>Taphrinomycotina</taxon>
        <taxon>Schizosaccharomycetes</taxon>
        <taxon>Schizosaccharomycetales</taxon>
        <taxon>Schizosaccharomycetaceae</taxon>
        <taxon>Schizosaccharomyces</taxon>
    </lineage>
</organism>
<keyword id="KW-0961">Cell wall biogenesis/degradation</keyword>
<keyword id="KW-0328">Glycosyltransferase</keyword>
<keyword id="KW-0511">Multifunctional enzyme</keyword>
<keyword id="KW-0597">Phosphoprotein</keyword>
<keyword id="KW-1185">Reference proteome</keyword>
<keyword id="KW-0808">Transferase</keyword>
<reference key="1">
    <citation type="journal article" date="1999" name="J. Cell Biol.">
        <title>Fission yeast alpha-glucan synthase Mok1 requires the actin cytoskeleton to localize the sites of growth and plays an essential role in cell morphogenesis downstream of protein kinase C function.</title>
        <authorList>
            <person name="Katayama S."/>
            <person name="Hirata D."/>
            <person name="Arellano M."/>
            <person name="Perez P."/>
            <person name="Toda T."/>
        </authorList>
    </citation>
    <scope>NUCLEOTIDE SEQUENCE [GENOMIC DNA]</scope>
</reference>
<reference key="2">
    <citation type="journal article" date="1998" name="Proc. Natl. Acad. Sci. U.S.A.">
        <title>Identification of a putative alpha-glucan synthase essential for cell wall construction and morphogenesis in fission yeast.</title>
        <authorList>
            <person name="Hochstenbach F."/>
            <person name="Klis F.M."/>
            <person name="van den Ende H."/>
            <person name="van Donselaar E."/>
            <person name="Peters P.J."/>
            <person name="Klausner R.D."/>
        </authorList>
    </citation>
    <scope>NUCLEOTIDE SEQUENCE [GENOMIC DNA / MRNA]</scope>
</reference>
<reference key="3">
    <citation type="journal article" date="2002" name="Nature">
        <title>The genome sequence of Schizosaccharomyces pombe.</title>
        <authorList>
            <person name="Wood V."/>
            <person name="Gwilliam R."/>
            <person name="Rajandream M.A."/>
            <person name="Lyne M.H."/>
            <person name="Lyne R."/>
            <person name="Stewart A."/>
            <person name="Sgouros J.G."/>
            <person name="Peat N."/>
            <person name="Hayles J."/>
            <person name="Baker S.G."/>
            <person name="Basham D."/>
            <person name="Bowman S."/>
            <person name="Brooks K."/>
            <person name="Brown D."/>
            <person name="Brown S."/>
            <person name="Chillingworth T."/>
            <person name="Churcher C.M."/>
            <person name="Collins M."/>
            <person name="Connor R."/>
            <person name="Cronin A."/>
            <person name="Davis P."/>
            <person name="Feltwell T."/>
            <person name="Fraser A."/>
            <person name="Gentles S."/>
            <person name="Goble A."/>
            <person name="Hamlin N."/>
            <person name="Harris D.E."/>
            <person name="Hidalgo J."/>
            <person name="Hodgson G."/>
            <person name="Holroyd S."/>
            <person name="Hornsby T."/>
            <person name="Howarth S."/>
            <person name="Huckle E.J."/>
            <person name="Hunt S."/>
            <person name="Jagels K."/>
            <person name="James K.D."/>
            <person name="Jones L."/>
            <person name="Jones M."/>
            <person name="Leather S."/>
            <person name="McDonald S."/>
            <person name="McLean J."/>
            <person name="Mooney P."/>
            <person name="Moule S."/>
            <person name="Mungall K.L."/>
            <person name="Murphy L.D."/>
            <person name="Niblett D."/>
            <person name="Odell C."/>
            <person name="Oliver K."/>
            <person name="O'Neil S."/>
            <person name="Pearson D."/>
            <person name="Quail M.A."/>
            <person name="Rabbinowitsch E."/>
            <person name="Rutherford K.M."/>
            <person name="Rutter S."/>
            <person name="Saunders D."/>
            <person name="Seeger K."/>
            <person name="Sharp S."/>
            <person name="Skelton J."/>
            <person name="Simmonds M.N."/>
            <person name="Squares R."/>
            <person name="Squares S."/>
            <person name="Stevens K."/>
            <person name="Taylor K."/>
            <person name="Taylor R.G."/>
            <person name="Tivey A."/>
            <person name="Walsh S.V."/>
            <person name="Warren T."/>
            <person name="Whitehead S."/>
            <person name="Woodward J.R."/>
            <person name="Volckaert G."/>
            <person name="Aert R."/>
            <person name="Robben J."/>
            <person name="Grymonprez B."/>
            <person name="Weltjens I."/>
            <person name="Vanstreels E."/>
            <person name="Rieger M."/>
            <person name="Schaefer M."/>
            <person name="Mueller-Auer S."/>
            <person name="Gabel C."/>
            <person name="Fuchs M."/>
            <person name="Duesterhoeft A."/>
            <person name="Fritzc C."/>
            <person name="Holzer E."/>
            <person name="Moestl D."/>
            <person name="Hilbert H."/>
            <person name="Borzym K."/>
            <person name="Langer I."/>
            <person name="Beck A."/>
            <person name="Lehrach H."/>
            <person name="Reinhardt R."/>
            <person name="Pohl T.M."/>
            <person name="Eger P."/>
            <person name="Zimmermann W."/>
            <person name="Wedler H."/>
            <person name="Wambutt R."/>
            <person name="Purnelle B."/>
            <person name="Goffeau A."/>
            <person name="Cadieu E."/>
            <person name="Dreano S."/>
            <person name="Gloux S."/>
            <person name="Lelaure V."/>
            <person name="Mottier S."/>
            <person name="Galibert F."/>
            <person name="Aves S.J."/>
            <person name="Xiang Z."/>
            <person name="Hunt C."/>
            <person name="Moore K."/>
            <person name="Hurst S.M."/>
            <person name="Lucas M."/>
            <person name="Rochet M."/>
            <person name="Gaillardin C."/>
            <person name="Tallada V.A."/>
            <person name="Garzon A."/>
            <person name="Thode G."/>
            <person name="Daga R.R."/>
            <person name="Cruzado L."/>
            <person name="Jimenez J."/>
            <person name="Sanchez M."/>
            <person name="del Rey F."/>
            <person name="Benito J."/>
            <person name="Dominguez A."/>
            <person name="Revuelta J.L."/>
            <person name="Moreno S."/>
            <person name="Armstrong J."/>
            <person name="Forsburg S.L."/>
            <person name="Cerutti L."/>
            <person name="Lowe T."/>
            <person name="McCombie W.R."/>
            <person name="Paulsen I."/>
            <person name="Potashkin J."/>
            <person name="Shpakovski G.V."/>
            <person name="Ussery D."/>
            <person name="Barrell B.G."/>
            <person name="Nurse P."/>
        </authorList>
    </citation>
    <scope>NUCLEOTIDE SEQUENCE [LARGE SCALE GENOMIC DNA]</scope>
    <source>
        <strain>972 / ATCC 24843</strain>
    </source>
</reference>
<reference key="4">
    <citation type="journal article" date="1997" name="DNA Res.">
        <title>Identification of open reading frames in Schizosaccharomyces pombe cDNAs.</title>
        <authorList>
            <person name="Yoshioka S."/>
            <person name="Kato K."/>
            <person name="Nakai K."/>
            <person name="Okayama H."/>
            <person name="Nojima H."/>
        </authorList>
    </citation>
    <scope>NUCLEOTIDE SEQUENCE [LARGE SCALE MRNA] OF 2044-2410</scope>
    <source>
        <strain>PR745</strain>
    </source>
</reference>
<reference key="5">
    <citation type="journal article" date="2004" name="Mol. Genet. Genomics">
        <title>Two-hybrid search for proteins that interact with Sad1 and Kms1, two membrane-bound components of the spindle pole body in fission yeast.</title>
        <authorList>
            <person name="Miki F."/>
            <person name="Kurabayashi A."/>
            <person name="Tange Y."/>
            <person name="Okazaki K."/>
            <person name="Shimanuki M."/>
            <person name="Niwa O."/>
        </authorList>
    </citation>
    <scope>INTERACTION WITH SAD1</scope>
</reference>
<reference key="6">
    <citation type="journal article" date="2007" name="J. Biol. Chem.">
        <title>Role of the synthase domain of Ags1p in cell wall {alpha}-glucan biosynthesis in fission yeast.</title>
        <authorList>
            <person name="Vos A."/>
            <person name="Dekker N."/>
            <person name="Distel B."/>
            <person name="Leunissen J.A."/>
            <person name="Hochstenbach F."/>
        </authorList>
    </citation>
    <scope>FUNCTION</scope>
    <scope>MUTAGENESIS OF GLU-1526</scope>
</reference>
<reference key="7">
    <citation type="journal article" date="2008" name="J. Proteome Res.">
        <title>Phosphoproteome analysis of fission yeast.</title>
        <authorList>
            <person name="Wilson-Grady J.T."/>
            <person name="Villen J."/>
            <person name="Gygi S.P."/>
        </authorList>
    </citation>
    <scope>PHOSPHORYLATION [LARGE SCALE ANALYSIS] AT SER-1643; SER-1644; SER-1651; THR-1653; SER-1738 AND SER-1812</scope>
    <scope>IDENTIFICATION BY MASS SPECTROMETRY</scope>
</reference>